<keyword id="KW-0963">Cytoplasm</keyword>
<keyword id="KW-0333">Golgi apparatus</keyword>
<keyword id="KW-0449">Lipoprotein</keyword>
<keyword id="KW-0519">Myristate</keyword>
<keyword id="KW-1185">Reference proteome</keyword>
<accession>Q6DCP6</accession>
<sequence>MGANSSTIKELSENEYLKKLSGMDSISENEPFWNQLLSFTLSTPTNSADSKLLEEGTLSICKSLIENNPRTGNLGALIRVFLSRTKELKISAECQNQLFIWQAHNALFIICCLIKVFTSQVSEEELLLHFTYRATDPGNYEADTEDLFEELLFCLIQLIVEIPLLDLTYSILLEAVTALIVLLSYQLFHKDILHESPIHKHLMNGRCLPYTSRLVKTLLYNFIRQEKSPPPGSHIFPQQQDGGGLLYGLASGVASGIWTVLTLGGVGSKPTPQQEQSSPLANQSLLLLLVLSNLTDSPDCPNPFRQSVTFFKNTQDSSVSPTPNPHSFQINFNSLYTSLCEQQKSDQATLLLYTLLHQNSNVRTYVLARSDMENLVLPILEILYHVEERNSHHVYMALIILLILTEDDGFNRSIHEVILKNITWYTERVLTEISLGSLLILVVIRTIQFNMTRTRDKYLHTNCLAALANMSAQFRSLHQYAAQRIISLFSLLSKKHNKVLEQATQSLRGSLGSDESPLPDYAQDLNVIEEVIRMMLEIINSCLTNSLHHNPNMVYALLYKRELFEQFRSHPSFQDIMQNIDMVISFFSLRLEQAGADLSVERVLEVIKQGAVALPKDRLRKFPELKFKYVEEEQPEEFFIPYVWSLVYHSGVGLYWNPQDVQLFTMDSG</sequence>
<gene>
    <name type="primary">dym</name>
</gene>
<protein>
    <recommendedName>
        <fullName>Dymeclin</fullName>
    </recommendedName>
</protein>
<feature type="initiator methionine" description="Removed" evidence="1">
    <location>
        <position position="1"/>
    </location>
</feature>
<feature type="chain" id="PRO_0000365013" description="Dymeclin">
    <location>
        <begin position="2"/>
        <end position="669"/>
    </location>
</feature>
<feature type="lipid moiety-binding region" description="N-myristoyl glycine" evidence="1">
    <location>
        <position position="2"/>
    </location>
</feature>
<dbReference type="EMBL" id="BC077956">
    <property type="protein sequence ID" value="AAH77956.1"/>
    <property type="molecule type" value="mRNA"/>
</dbReference>
<dbReference type="RefSeq" id="NP_001087057.1">
    <property type="nucleotide sequence ID" value="NM_001093588.1"/>
</dbReference>
<dbReference type="BioGRID" id="103752">
    <property type="interactions" value="1"/>
</dbReference>
<dbReference type="DNASU" id="446892"/>
<dbReference type="GeneID" id="446892"/>
<dbReference type="KEGG" id="xla:446892"/>
<dbReference type="AGR" id="Xenbase:XB-GENE-5729316"/>
<dbReference type="CTD" id="446892"/>
<dbReference type="Xenbase" id="XB-GENE-5729316">
    <property type="gene designation" value="dym.L"/>
</dbReference>
<dbReference type="OrthoDB" id="10253409at2759"/>
<dbReference type="Proteomes" id="UP000186698">
    <property type="component" value="Chromosome 1L"/>
</dbReference>
<dbReference type="Bgee" id="446892">
    <property type="expression patterns" value="Expressed in testis and 19 other cell types or tissues"/>
</dbReference>
<dbReference type="GO" id="GO:0005794">
    <property type="term" value="C:Golgi apparatus"/>
    <property type="evidence" value="ECO:0000318"/>
    <property type="project" value="GO_Central"/>
</dbReference>
<dbReference type="GO" id="GO:0007030">
    <property type="term" value="P:Golgi organization"/>
    <property type="evidence" value="ECO:0000318"/>
    <property type="project" value="GO_Central"/>
</dbReference>
<dbReference type="InterPro" id="IPR019142">
    <property type="entry name" value="Dymeclin"/>
</dbReference>
<dbReference type="PANTHER" id="PTHR12895">
    <property type="entry name" value="DYMECLIN"/>
    <property type="match status" value="1"/>
</dbReference>
<dbReference type="PANTHER" id="PTHR12895:SF9">
    <property type="entry name" value="DYMECLIN"/>
    <property type="match status" value="1"/>
</dbReference>
<dbReference type="Pfam" id="PF09742">
    <property type="entry name" value="Dymeclin"/>
    <property type="match status" value="1"/>
</dbReference>
<name>DYM_XENLA</name>
<organism>
    <name type="scientific">Xenopus laevis</name>
    <name type="common">African clawed frog</name>
    <dbReference type="NCBI Taxonomy" id="8355"/>
    <lineage>
        <taxon>Eukaryota</taxon>
        <taxon>Metazoa</taxon>
        <taxon>Chordata</taxon>
        <taxon>Craniata</taxon>
        <taxon>Vertebrata</taxon>
        <taxon>Euteleostomi</taxon>
        <taxon>Amphibia</taxon>
        <taxon>Batrachia</taxon>
        <taxon>Anura</taxon>
        <taxon>Pipoidea</taxon>
        <taxon>Pipidae</taxon>
        <taxon>Xenopodinae</taxon>
        <taxon>Xenopus</taxon>
        <taxon>Xenopus</taxon>
    </lineage>
</organism>
<reference key="1">
    <citation type="submission" date="2004-07" db="EMBL/GenBank/DDBJ databases">
        <authorList>
            <consortium name="NIH - Xenopus Gene Collection (XGC) project"/>
        </authorList>
    </citation>
    <scope>NUCLEOTIDE SEQUENCE [LARGE SCALE MRNA]</scope>
    <source>
        <tissue>Embryo</tissue>
    </source>
</reference>
<comment type="function">
    <text evidence="1">Necessary for correct organization of Golgi apparatus.</text>
</comment>
<comment type="subcellular location">
    <subcellularLocation>
        <location>Cytoplasm</location>
    </subcellularLocation>
    <subcellularLocation>
        <location evidence="1">Golgi apparatus</location>
    </subcellularLocation>
    <text evidence="1">Sequence analysis programs predict 3 transmembrane regions. However, it has been shown in human that it is not a stably anchored transmembrane protein but it weakly associates with the Golgi apparatus and shuttles between the Golgi and the cytosol (By similarity).</text>
</comment>
<comment type="PTM">
    <text evidence="1">Myristoylated in vitro; myristoylation is not essential for protein targeting to Golgi compartment.</text>
</comment>
<comment type="similarity">
    <text evidence="2">Belongs to the dymeclin family.</text>
</comment>
<evidence type="ECO:0000250" key="1"/>
<evidence type="ECO:0000305" key="2"/>
<proteinExistence type="evidence at transcript level"/>